<organism>
    <name type="scientific">Moraxella sp. (strain TAE123)</name>
    <dbReference type="NCBI Taxonomy" id="191545"/>
    <lineage>
        <taxon>Bacteria</taxon>
        <taxon>Pseudomonadati</taxon>
        <taxon>Pseudomonadota</taxon>
        <taxon>Gammaproteobacteria</taxon>
        <taxon>Moraxellales</taxon>
        <taxon>Moraxellaceae</taxon>
        <taxon>Moraxella</taxon>
    </lineage>
</organism>
<comment type="catalytic activity">
    <reaction evidence="2">
        <text>an aldehyde + NAD(+) + H2O = a carboxylate + NADH + 2 H(+)</text>
        <dbReference type="Rhea" id="RHEA:16185"/>
        <dbReference type="ChEBI" id="CHEBI:15377"/>
        <dbReference type="ChEBI" id="CHEBI:15378"/>
        <dbReference type="ChEBI" id="CHEBI:17478"/>
        <dbReference type="ChEBI" id="CHEBI:29067"/>
        <dbReference type="ChEBI" id="CHEBI:57540"/>
        <dbReference type="ChEBI" id="CHEBI:57945"/>
        <dbReference type="EC" id="1.2.1.3"/>
    </reaction>
</comment>
<comment type="similarity">
    <text evidence="2">Belongs to the aldehyde dehydrogenase family.</text>
</comment>
<comment type="caution">
    <text evidence="1 2">Was originally described as an NAD(+)-dependent alcohol dehydrogenase (ADH) (PubMed:9660191). However, BLAST alignments indicate that this fragment represents the N-terminal sequence of an aldehyde dehydrogenase. The protein characterized in this article does not correspond to the sequenced fragment but to the alcohol dehydrogenase as shown in the UniProtKB AC Q8GIX7 entry.</text>
</comment>
<protein>
    <recommendedName>
        <fullName evidence="2">Aldehyde dehydrogenase</fullName>
        <ecNumber evidence="2">1.2.1.3</ecNumber>
    </recommendedName>
</protein>
<proteinExistence type="evidence at protein level"/>
<reference key="1">
    <citation type="journal article" date="1998" name="Eur. J. Biochem.">
        <title>Purification and characterization of an alcohol dehydrogenase from the Antarctic psychrophile Moraxella sp. TAE123.</title>
        <authorList>
            <person name="Tsigos I."/>
            <person name="Velonia K."/>
            <person name="Smonou I."/>
            <person name="Bouriotis V."/>
        </authorList>
    </citation>
    <scope>PROTEIN SEQUENCE</scope>
    <source>
        <strain>TAE123</strain>
    </source>
</reference>
<name>ALDH_MORSE</name>
<dbReference type="EC" id="1.2.1.3" evidence="2"/>
<dbReference type="SABIO-RK" id="P81786"/>
<dbReference type="GO" id="GO:0008106">
    <property type="term" value="F:alcohol dehydrogenase (NADP+) activity"/>
    <property type="evidence" value="ECO:0000314"/>
    <property type="project" value="UniProtKB"/>
</dbReference>
<dbReference type="GO" id="GO:0004029">
    <property type="term" value="F:aldehyde dehydrogenase (NAD+) activity"/>
    <property type="evidence" value="ECO:0007669"/>
    <property type="project" value="UniProtKB-EC"/>
</dbReference>
<dbReference type="GO" id="GO:0008270">
    <property type="term" value="F:zinc ion binding"/>
    <property type="evidence" value="ECO:0000304"/>
    <property type="project" value="UniProtKB"/>
</dbReference>
<dbReference type="GO" id="GO:0006066">
    <property type="term" value="P:alcohol metabolic process"/>
    <property type="evidence" value="ECO:0000314"/>
    <property type="project" value="UniProtKB"/>
</dbReference>
<sequence>MLYANPNTESSPVGFRKKYDNFI</sequence>
<evidence type="ECO:0000269" key="1">
    <source>
    </source>
</evidence>
<evidence type="ECO:0000305" key="2"/>
<accession>P81786</accession>
<keyword id="KW-0903">Direct protein sequencing</keyword>
<keyword id="KW-0520">NAD</keyword>
<keyword id="KW-0560">Oxidoreductase</keyword>
<feature type="chain" id="PRO_0000160741" description="Aldehyde dehydrogenase">
    <location>
        <begin position="1"/>
        <end position="23" status="greater than"/>
    </location>
</feature>
<feature type="non-terminal residue" evidence="2">
    <location>
        <position position="23"/>
    </location>
</feature>